<sequence length="507" mass="57386">MTLRKTAGYLWNPISLIGFLLAVVATGLIIAFIAMEMITGIDHPYIGLLVYFAFPGMLILGLILVPIGAWRVRNQRRTEVPEEVPPYPRVDFNDPHKRRLFIFFVLASVIFVLIVSVASILGFEFTESTTFCGELCHVVMEPEHKAWQGSPHARVKCVECHVGPGAEWYVKAKLSGLRQVWAVLTHSYHFPIATPIENLRPARDTCEQCHWPEKFYSGRQRVFYHYAPNKENTPREINMLIKIGGTPKSPHAMGIHWHIGTEVTYIARDRKRLDIPYVAVKQKDGSIVEYMDTEKPLTREEIAKAEKRRMDCIDCHNRPTHIYRSPAREMDEHIVSGQIDAGLPYIKKVAVEILEQPYKSKEEAHAAIEAKLPEYYAKNFPEVAKVKAAAINQAVAHVKDIYSRNFFPRMKVTWSTYPNHIGHFYTPGCFRCHDGKHKTSTGKIISKDCNMCHEMIGQKGENIPEGKVVKEFVHPADIGDALYNVNCSDCHMAAAEDSAGGEGPGKH</sequence>
<evidence type="ECO:0000250" key="1">
    <source>
        <dbReference type="UniProtKB" id="Q72EF4"/>
    </source>
</evidence>
<evidence type="ECO:0000255" key="2"/>
<evidence type="ECO:0000269" key="3">
    <source>
    </source>
</evidence>
<evidence type="ECO:0000303" key="4">
    <source>
    </source>
</evidence>
<evidence type="ECO:0000305" key="5"/>
<evidence type="ECO:0000305" key="6">
    <source>
    </source>
</evidence>
<evidence type="ECO:0000312" key="7">
    <source>
        <dbReference type="EMBL" id="AAR36650.1"/>
    </source>
</evidence>
<keyword id="KW-0997">Cell inner membrane</keyword>
<keyword id="KW-1003">Cell membrane</keyword>
<keyword id="KW-0249">Electron transport</keyword>
<keyword id="KW-0349">Heme</keyword>
<keyword id="KW-0408">Iron</keyword>
<keyword id="KW-0472">Membrane</keyword>
<keyword id="KW-0479">Metal-binding</keyword>
<keyword id="KW-1185">Reference proteome</keyword>
<keyword id="KW-0812">Transmembrane</keyword>
<keyword id="KW-1133">Transmembrane helix</keyword>
<keyword id="KW-0813">Transport</keyword>
<gene>
    <name evidence="4" type="primary">imcH</name>
    <name evidence="7" type="ordered locus">GSU3259</name>
</gene>
<protein>
    <recommendedName>
        <fullName evidence="4">Cytochrome c-type protein ImcH</fullName>
    </recommendedName>
    <alternativeName>
        <fullName evidence="4">Inner membrane cytochrome H</fullName>
    </alternativeName>
    <alternativeName>
        <fullName evidence="4">Multiheme c-type cytochrome</fullName>
    </alternativeName>
</protein>
<comment type="function">
    <text evidence="3">Redox protein involved in a high-potential metal respiratory pathway. Is required only for electron transfer to terminal extracellular electron acceptors with redox potentials higher than -0.1 V. ImcH likely transfers electrons from the quinone pool to a periplasmic acceptor.</text>
</comment>
<comment type="subcellular location">
    <subcellularLocation>
        <location evidence="3">Cell inner membrane</location>
        <topology evidence="2">Multi-pass membrane protein</topology>
    </subcellularLocation>
</comment>
<comment type="induction">
    <text evidence="3">Constitutively expressed.</text>
</comment>
<comment type="PTM">
    <text evidence="6">Binds 4 heme c groups covalently per subunit.</text>
</comment>
<comment type="disruption phenotype">
    <text evidence="3">Disruption of this gene eliminates the ability of G.sulfurreducens to reduce soluble Fe(III) citrate, Fe(III)-EDTA, and insoluble Mn(IV) oxides, electron acceptors with potentials greater than 0.1 V versus the standard hydrogen electrode (SHE), but the imcH mutant retains the ability to reduce Fe(III) oxides with potentials of &lt;-0.1 V versus SHE. The imcH mutant fails to grow on electrodes poised at +0.24 V versus SHE, but switching electrodes to -0.1 V versus SHE triggers exponential growth. Growth with fumarate as the electron acceptor is unaffected in the deletion mutant.</text>
</comment>
<comment type="similarity">
    <text evidence="5">Belongs to the NapC/NirT/NrfH family.</text>
</comment>
<proteinExistence type="evidence at transcript level"/>
<organism>
    <name type="scientific">Geobacter sulfurreducens (strain ATCC 51573 / DSM 12127 / PCA)</name>
    <dbReference type="NCBI Taxonomy" id="243231"/>
    <lineage>
        <taxon>Bacteria</taxon>
        <taxon>Pseudomonadati</taxon>
        <taxon>Thermodesulfobacteriota</taxon>
        <taxon>Desulfuromonadia</taxon>
        <taxon>Geobacterales</taxon>
        <taxon>Geobacteraceae</taxon>
        <taxon>Geobacter</taxon>
    </lineage>
</organism>
<reference key="1">
    <citation type="journal article" date="2003" name="Science">
        <title>Genome of Geobacter sulfurreducens: metal reduction in subsurface environments.</title>
        <authorList>
            <person name="Methe B.A."/>
            <person name="Nelson K.E."/>
            <person name="Eisen J.A."/>
            <person name="Paulsen I.T."/>
            <person name="Nelson W.C."/>
            <person name="Heidelberg J.F."/>
            <person name="Wu D."/>
            <person name="Wu M."/>
            <person name="Ward N.L."/>
            <person name="Beanan M.J."/>
            <person name="Dodson R.J."/>
            <person name="Madupu R."/>
            <person name="Brinkac L.M."/>
            <person name="Daugherty S.C."/>
            <person name="DeBoy R.T."/>
            <person name="Durkin A.S."/>
            <person name="Gwinn M.L."/>
            <person name="Kolonay J.F."/>
            <person name="Sullivan S.A."/>
            <person name="Haft D.H."/>
            <person name="Selengut J."/>
            <person name="Davidsen T.M."/>
            <person name="Zafar N."/>
            <person name="White O."/>
            <person name="Tran B."/>
            <person name="Romero C."/>
            <person name="Forberger H.A."/>
            <person name="Weidman J.F."/>
            <person name="Khouri H.M."/>
            <person name="Feldblyum T.V."/>
            <person name="Utterback T.R."/>
            <person name="Van Aken S.E."/>
            <person name="Lovley D.R."/>
            <person name="Fraser C.M."/>
        </authorList>
    </citation>
    <scope>NUCLEOTIDE SEQUENCE [LARGE SCALE GENOMIC DNA]</scope>
    <source>
        <strain>ATCC 51573 / DSM 12127 / PCA</strain>
    </source>
</reference>
<reference key="2">
    <citation type="journal article" date="2014" name="MBio">
        <title>An inner membrane cytochrome required only for reduction of high redox potential extracellular electron acceptors.</title>
        <authorList>
            <person name="Levar C.E."/>
            <person name="Chan C.H."/>
            <person name="Mehta-Kolte M.G."/>
            <person name="Bond D.R."/>
        </authorList>
    </citation>
    <scope>FUNCTION</scope>
    <scope>SUBCELLULAR LOCATION</scope>
    <scope>INDUCTION</scope>
    <scope>DISRUPTION PHENOTYPE</scope>
    <source>
        <strain>ATCC 51573 / DSM 12127 / PCA</strain>
    </source>
</reference>
<accession>Q747K6</accession>
<name>IMCH_GEOSL</name>
<feature type="chain" id="PRO_0000444695" description="Cytochrome c-type protein ImcH">
    <location>
        <begin position="1"/>
        <end position="507"/>
    </location>
</feature>
<feature type="transmembrane region" description="Helical" evidence="2">
    <location>
        <begin position="14"/>
        <end position="34"/>
    </location>
</feature>
<feature type="transmembrane region" description="Helical" evidence="2">
    <location>
        <begin position="45"/>
        <end position="65"/>
    </location>
</feature>
<feature type="transmembrane region" description="Helical" evidence="2">
    <location>
        <begin position="100"/>
        <end position="120"/>
    </location>
</feature>
<feature type="binding site" description="covalent" evidence="1">
    <location>
        <position position="132"/>
    </location>
    <ligand>
        <name>heme</name>
        <dbReference type="ChEBI" id="CHEBI:30413"/>
        <label>1</label>
    </ligand>
</feature>
<feature type="binding site" description="covalent" evidence="1">
    <location>
        <position position="136"/>
    </location>
    <ligand>
        <name>heme</name>
        <dbReference type="ChEBI" id="CHEBI:30413"/>
        <label>1</label>
    </ligand>
</feature>
<feature type="binding site" description="axial binding residue" evidence="1">
    <location>
        <position position="140"/>
    </location>
    <ligand>
        <name>heme</name>
        <dbReference type="ChEBI" id="CHEBI:30413"/>
        <label>1</label>
    </ligand>
    <ligandPart>
        <name>Fe</name>
        <dbReference type="ChEBI" id="CHEBI:18248"/>
    </ligandPart>
</feature>
<feature type="binding site" description="axial binding residue" evidence="1">
    <location>
        <position position="152"/>
    </location>
    <ligand>
        <name>heme</name>
        <dbReference type="ChEBI" id="CHEBI:30413"/>
        <label>3</label>
    </ligand>
    <ligandPart>
        <name>Fe</name>
        <dbReference type="ChEBI" id="CHEBI:18248"/>
    </ligandPart>
</feature>
<feature type="binding site" description="covalent" evidence="1">
    <location>
        <position position="157"/>
    </location>
    <ligand>
        <name>heme</name>
        <dbReference type="ChEBI" id="CHEBI:30413"/>
        <label>2</label>
    </ligand>
</feature>
<feature type="binding site" description="covalent" evidence="1">
    <location>
        <position position="160"/>
    </location>
    <ligand>
        <name>heme</name>
        <dbReference type="ChEBI" id="CHEBI:30413"/>
        <label>2</label>
    </ligand>
</feature>
<feature type="binding site" description="axial binding residue" evidence="1">
    <location>
        <position position="161"/>
    </location>
    <ligand>
        <name>heme</name>
        <dbReference type="ChEBI" id="CHEBI:30413"/>
        <label>2</label>
    </ligand>
    <ligandPart>
        <name>Fe</name>
        <dbReference type="ChEBI" id="CHEBI:18248"/>
    </ligandPart>
</feature>
<feature type="binding site" description="axial binding residue" evidence="1">
    <location>
        <position position="400"/>
    </location>
    <ligand>
        <name>heme</name>
        <dbReference type="ChEBI" id="CHEBI:30413"/>
        <label>1</label>
    </ligand>
    <ligandPart>
        <name>Fe</name>
        <dbReference type="ChEBI" id="CHEBI:18248"/>
    </ligandPart>
</feature>
<feature type="binding site" description="covalent" evidence="1">
    <location>
        <position position="449"/>
    </location>
    <ligand>
        <name>heme</name>
        <dbReference type="ChEBI" id="CHEBI:30413"/>
        <label>3</label>
    </ligand>
</feature>
<feature type="binding site" description="covalent" evidence="1">
    <location>
        <position position="452"/>
    </location>
    <ligand>
        <name>heme</name>
        <dbReference type="ChEBI" id="CHEBI:30413"/>
        <label>3</label>
    </ligand>
</feature>
<feature type="binding site" description="axial binding residue" evidence="1">
    <location>
        <position position="453"/>
    </location>
    <ligand>
        <name>heme</name>
        <dbReference type="ChEBI" id="CHEBI:30413"/>
        <label>3</label>
    </ligand>
    <ligandPart>
        <name>Fe</name>
        <dbReference type="ChEBI" id="CHEBI:18248"/>
    </ligandPart>
</feature>
<feature type="binding site" description="covalent" evidence="1">
    <location>
        <position position="487"/>
    </location>
    <ligand>
        <name>heme</name>
        <dbReference type="ChEBI" id="CHEBI:30413"/>
        <label>4</label>
    </ligand>
</feature>
<feature type="binding site" description="covalent" evidence="1">
    <location>
        <position position="490"/>
    </location>
    <ligand>
        <name>heme</name>
        <dbReference type="ChEBI" id="CHEBI:30413"/>
        <label>4</label>
    </ligand>
</feature>
<feature type="binding site" description="axial binding residue" evidence="1">
    <location>
        <position position="491"/>
    </location>
    <ligand>
        <name>heme</name>
        <dbReference type="ChEBI" id="CHEBI:30413"/>
        <label>4</label>
    </ligand>
    <ligandPart>
        <name>Fe</name>
        <dbReference type="ChEBI" id="CHEBI:18248"/>
    </ligandPart>
</feature>
<feature type="binding site" description="axial binding residue" evidence="1">
    <location>
        <position position="496"/>
    </location>
    <ligand>
        <name>heme</name>
        <dbReference type="ChEBI" id="CHEBI:30413"/>
        <label>2</label>
    </ligand>
    <ligandPart>
        <name>Fe</name>
        <dbReference type="ChEBI" id="CHEBI:18248"/>
    </ligandPart>
</feature>
<dbReference type="EMBL" id="AE017180">
    <property type="protein sequence ID" value="AAR36650.1"/>
    <property type="molecule type" value="Genomic_DNA"/>
</dbReference>
<dbReference type="RefSeq" id="NP_954300.1">
    <property type="nucleotide sequence ID" value="NC_002939.5"/>
</dbReference>
<dbReference type="RefSeq" id="WP_010943871.1">
    <property type="nucleotide sequence ID" value="NC_002939.5"/>
</dbReference>
<dbReference type="STRING" id="243231.GSU3259"/>
<dbReference type="EnsemblBacteria" id="AAR36650">
    <property type="protein sequence ID" value="AAR36650"/>
    <property type="gene ID" value="GSU3259"/>
</dbReference>
<dbReference type="KEGG" id="gsu:GSU3259"/>
<dbReference type="PATRIC" id="fig|243231.5.peg.3276"/>
<dbReference type="eggNOG" id="COG3005">
    <property type="taxonomic scope" value="Bacteria"/>
</dbReference>
<dbReference type="HOGENOM" id="CLU_543785_0_0_7"/>
<dbReference type="InParanoid" id="Q747K6"/>
<dbReference type="OrthoDB" id="9791652at2"/>
<dbReference type="Proteomes" id="UP000000577">
    <property type="component" value="Chromosome"/>
</dbReference>
<dbReference type="GO" id="GO:0005886">
    <property type="term" value="C:plasma membrane"/>
    <property type="evidence" value="ECO:0007669"/>
    <property type="project" value="UniProtKB-SubCell"/>
</dbReference>
<dbReference type="GO" id="GO:0009055">
    <property type="term" value="F:electron transfer activity"/>
    <property type="evidence" value="ECO:0000318"/>
    <property type="project" value="GO_Central"/>
</dbReference>
<dbReference type="GO" id="GO:0046872">
    <property type="term" value="F:metal ion binding"/>
    <property type="evidence" value="ECO:0007669"/>
    <property type="project" value="UniProtKB-KW"/>
</dbReference>
<dbReference type="GO" id="GO:0009061">
    <property type="term" value="P:anaerobic respiration"/>
    <property type="evidence" value="ECO:0000318"/>
    <property type="project" value="GO_Central"/>
</dbReference>
<dbReference type="FunFam" id="1.10.3820.10:FF:000005">
    <property type="entry name" value="Cytochrome C"/>
    <property type="match status" value="1"/>
</dbReference>
<dbReference type="Gene3D" id="3.90.10.10">
    <property type="entry name" value="Cytochrome C3"/>
    <property type="match status" value="1"/>
</dbReference>
<dbReference type="Gene3D" id="1.10.3820.10">
    <property type="entry name" value="Di-heme elbow motif domain"/>
    <property type="match status" value="1"/>
</dbReference>
<dbReference type="InterPro" id="IPR051174">
    <property type="entry name" value="Cytochrome_c-type_ET"/>
</dbReference>
<dbReference type="InterPro" id="IPR036280">
    <property type="entry name" value="Multihaem_cyt_sf"/>
</dbReference>
<dbReference type="InterPro" id="IPR005126">
    <property type="entry name" value="NapC/NirT_cyt_c_N"/>
</dbReference>
<dbReference type="InterPro" id="IPR038266">
    <property type="entry name" value="NapC/NirT_cytc_sf"/>
</dbReference>
<dbReference type="PANTHER" id="PTHR30333">
    <property type="entry name" value="CYTOCHROME C-TYPE PROTEIN"/>
    <property type="match status" value="1"/>
</dbReference>
<dbReference type="PANTHER" id="PTHR30333:SF1">
    <property type="entry name" value="CYTOCHROME C-TYPE PROTEIN NAPC"/>
    <property type="match status" value="1"/>
</dbReference>
<dbReference type="Pfam" id="PF03264">
    <property type="entry name" value="Cytochrom_NNT"/>
    <property type="match status" value="1"/>
</dbReference>
<dbReference type="SUPFAM" id="SSF48695">
    <property type="entry name" value="Multiheme cytochromes"/>
    <property type="match status" value="1"/>
</dbReference>
<dbReference type="PROSITE" id="PS51008">
    <property type="entry name" value="MULTIHEME_CYTC"/>
    <property type="match status" value="1"/>
</dbReference>